<keyword id="KW-0120">Carbon dioxide fixation</keyword>
<keyword id="KW-0456">Lyase</keyword>
<keyword id="KW-0460">Magnesium</keyword>
<proteinExistence type="inferred from homology"/>
<organism>
    <name type="scientific">Burkholderia mallei (strain SAVP1)</name>
    <dbReference type="NCBI Taxonomy" id="320388"/>
    <lineage>
        <taxon>Bacteria</taxon>
        <taxon>Pseudomonadati</taxon>
        <taxon>Pseudomonadota</taxon>
        <taxon>Betaproteobacteria</taxon>
        <taxon>Burkholderiales</taxon>
        <taxon>Burkholderiaceae</taxon>
        <taxon>Burkholderia</taxon>
        <taxon>pseudomallei group</taxon>
    </lineage>
</organism>
<sequence length="994" mass="108735">MKSSGSARATRRNAVSSSSAPAHAEPPARRAAKPARKLDGAAARPLAPTNAASAKPQGRTREDKDRPLFEDIRYLGRLLGDVVREQEGDAVFDVVETIRQTAVKFRREDDKAAAQTLEKMLRKLTPEQTVSVVRAFSYFSHLANIAEDRHHNRRRRIHALAGSAAQAGTVAYALDKLKQAGDASSKTIKQFFEGALIVPVLTAHPTEVQRKSILDAQHDIARLLAERDQPLTARELAHNEALLRARVTTLWQTRMLRDARLTVADEIENALSYYRATFLDELPALYADIEEALAEHGLRARVPAFFQMGSWIGGDRDGNPNVTAATLDEAISRQAAVIFEHYLEQVHKLGAELSVSNLLVGASDALKALAAASPDQSPHRVDEPYRRALIGVYTRLAASARVRLGEGTVPVRSAGRGAAPVRATPYADAEEFAADLRVLTDSLALHHGESLATPRLAPLMRAAEVFGFHLASIDLRQSSDIHEAVVAELLARGGVEADYAALPEADKLRVLLAALADPRPLRSPYLDYSDLAKSELGVLERAHAIRAQFGARAVRNYIISHTETVSDLVEVLLLQKETGLFEGTLGTPHANARNGLMVIPLFETIADLRNASDIMRAFFALPGVGELLAHQGHEQEVMLGYSDSNKDGGFLTSNWELYRAELALVDLFDERGIKLRLFHGRGGTVGRGGGPTYQAILSQPPGTVNGQIRLTEQGEVIASKFANPEIGRRNLETVVAATLEATLAPHSNAPKQLPAFEAAMQTLSDAAMASYRALVYETPGFTDYFFSSTPITEIAELNIGSRPASRKLQDPKNRKIEDLRAIPWGFSWGQCRLLLTGWYGFGSAVAAYLDGAPDAAERGKRVALLKKMNKTWPFFANLLSNMDMVLAKTDLAVASRYAQLVADKKLRKHVFERIVAEWHRTADALAEITGAHARLAANPLLARSIKNRFPYLDPLNHLQVELIKRHRAGDTNARLRRGIHLTINGIAAGLRNTG</sequence>
<dbReference type="EC" id="4.1.1.31" evidence="1"/>
<dbReference type="EMBL" id="CP000526">
    <property type="protein sequence ID" value="ABM51210.1"/>
    <property type="molecule type" value="Genomic_DNA"/>
</dbReference>
<dbReference type="RefSeq" id="WP_004191560.1">
    <property type="nucleotide sequence ID" value="NC_008785.1"/>
</dbReference>
<dbReference type="SMR" id="A1V5U2"/>
<dbReference type="GeneID" id="93059514"/>
<dbReference type="KEGG" id="bmv:BMASAVP1_A2286"/>
<dbReference type="HOGENOM" id="CLU_006557_2_0_4"/>
<dbReference type="GO" id="GO:0005829">
    <property type="term" value="C:cytosol"/>
    <property type="evidence" value="ECO:0007669"/>
    <property type="project" value="TreeGrafter"/>
</dbReference>
<dbReference type="GO" id="GO:0000287">
    <property type="term" value="F:magnesium ion binding"/>
    <property type="evidence" value="ECO:0007669"/>
    <property type="project" value="UniProtKB-UniRule"/>
</dbReference>
<dbReference type="GO" id="GO:0008964">
    <property type="term" value="F:phosphoenolpyruvate carboxylase activity"/>
    <property type="evidence" value="ECO:0007669"/>
    <property type="project" value="UniProtKB-UniRule"/>
</dbReference>
<dbReference type="GO" id="GO:0015977">
    <property type="term" value="P:carbon fixation"/>
    <property type="evidence" value="ECO:0007669"/>
    <property type="project" value="UniProtKB-UniRule"/>
</dbReference>
<dbReference type="GO" id="GO:0006107">
    <property type="term" value="P:oxaloacetate metabolic process"/>
    <property type="evidence" value="ECO:0007669"/>
    <property type="project" value="UniProtKB-UniRule"/>
</dbReference>
<dbReference type="GO" id="GO:0006099">
    <property type="term" value="P:tricarboxylic acid cycle"/>
    <property type="evidence" value="ECO:0007669"/>
    <property type="project" value="InterPro"/>
</dbReference>
<dbReference type="Gene3D" id="1.20.1440.90">
    <property type="entry name" value="Phosphoenolpyruvate/pyruvate domain"/>
    <property type="match status" value="1"/>
</dbReference>
<dbReference type="HAMAP" id="MF_00595">
    <property type="entry name" value="PEPcase_type1"/>
    <property type="match status" value="1"/>
</dbReference>
<dbReference type="InterPro" id="IPR021135">
    <property type="entry name" value="PEP_COase"/>
</dbReference>
<dbReference type="InterPro" id="IPR022805">
    <property type="entry name" value="PEP_COase_bac/pln-type"/>
</dbReference>
<dbReference type="InterPro" id="IPR018129">
    <property type="entry name" value="PEP_COase_Lys_AS"/>
</dbReference>
<dbReference type="InterPro" id="IPR033129">
    <property type="entry name" value="PEPCASE_His_AS"/>
</dbReference>
<dbReference type="InterPro" id="IPR015813">
    <property type="entry name" value="Pyrv/PenolPyrv_kinase-like_dom"/>
</dbReference>
<dbReference type="NCBIfam" id="NF000584">
    <property type="entry name" value="PRK00009.1"/>
    <property type="match status" value="1"/>
</dbReference>
<dbReference type="PANTHER" id="PTHR30523">
    <property type="entry name" value="PHOSPHOENOLPYRUVATE CARBOXYLASE"/>
    <property type="match status" value="1"/>
</dbReference>
<dbReference type="PANTHER" id="PTHR30523:SF6">
    <property type="entry name" value="PHOSPHOENOLPYRUVATE CARBOXYLASE"/>
    <property type="match status" value="1"/>
</dbReference>
<dbReference type="Pfam" id="PF00311">
    <property type="entry name" value="PEPcase"/>
    <property type="match status" value="1"/>
</dbReference>
<dbReference type="PRINTS" id="PR00150">
    <property type="entry name" value="PEPCARBXLASE"/>
</dbReference>
<dbReference type="SUPFAM" id="SSF51621">
    <property type="entry name" value="Phosphoenolpyruvate/pyruvate domain"/>
    <property type="match status" value="1"/>
</dbReference>
<dbReference type="PROSITE" id="PS00781">
    <property type="entry name" value="PEPCASE_1"/>
    <property type="match status" value="1"/>
</dbReference>
<dbReference type="PROSITE" id="PS00393">
    <property type="entry name" value="PEPCASE_2"/>
    <property type="match status" value="1"/>
</dbReference>
<reference key="1">
    <citation type="journal article" date="2010" name="Genome Biol. Evol.">
        <title>Continuing evolution of Burkholderia mallei through genome reduction and large-scale rearrangements.</title>
        <authorList>
            <person name="Losada L."/>
            <person name="Ronning C.M."/>
            <person name="DeShazer D."/>
            <person name="Woods D."/>
            <person name="Fedorova N."/>
            <person name="Kim H.S."/>
            <person name="Shabalina S.A."/>
            <person name="Pearson T.R."/>
            <person name="Brinkac L."/>
            <person name="Tan P."/>
            <person name="Nandi T."/>
            <person name="Crabtree J."/>
            <person name="Badger J."/>
            <person name="Beckstrom-Sternberg S."/>
            <person name="Saqib M."/>
            <person name="Schutzer S.E."/>
            <person name="Keim P."/>
            <person name="Nierman W.C."/>
        </authorList>
    </citation>
    <scope>NUCLEOTIDE SEQUENCE [LARGE SCALE GENOMIC DNA]</scope>
    <source>
        <strain>SAVP1</strain>
    </source>
</reference>
<comment type="function">
    <text evidence="1">Forms oxaloacetate, a four-carbon dicarboxylic acid source for the tricarboxylic acid cycle.</text>
</comment>
<comment type="catalytic activity">
    <reaction evidence="1">
        <text>oxaloacetate + phosphate = phosphoenolpyruvate + hydrogencarbonate</text>
        <dbReference type="Rhea" id="RHEA:28370"/>
        <dbReference type="ChEBI" id="CHEBI:16452"/>
        <dbReference type="ChEBI" id="CHEBI:17544"/>
        <dbReference type="ChEBI" id="CHEBI:43474"/>
        <dbReference type="ChEBI" id="CHEBI:58702"/>
        <dbReference type="EC" id="4.1.1.31"/>
    </reaction>
</comment>
<comment type="cofactor">
    <cofactor evidence="1">
        <name>Mg(2+)</name>
        <dbReference type="ChEBI" id="CHEBI:18420"/>
    </cofactor>
</comment>
<comment type="similarity">
    <text evidence="1">Belongs to the PEPCase type 1 family.</text>
</comment>
<gene>
    <name evidence="1" type="primary">ppc</name>
    <name type="ordered locus">BMASAVP1_A2286</name>
</gene>
<evidence type="ECO:0000255" key="1">
    <source>
        <dbReference type="HAMAP-Rule" id="MF_00595"/>
    </source>
</evidence>
<evidence type="ECO:0000256" key="2">
    <source>
        <dbReference type="SAM" id="MobiDB-lite"/>
    </source>
</evidence>
<protein>
    <recommendedName>
        <fullName evidence="1">Phosphoenolpyruvate carboxylase</fullName>
        <shortName evidence="1">PEPC</shortName>
        <shortName evidence="1">PEPCase</shortName>
        <ecNumber evidence="1">4.1.1.31</ecNumber>
    </recommendedName>
</protein>
<name>CAPP_BURMS</name>
<accession>A1V5U2</accession>
<feature type="chain" id="PRO_1000025551" description="Phosphoenolpyruvate carboxylase">
    <location>
        <begin position="1"/>
        <end position="994"/>
    </location>
</feature>
<feature type="region of interest" description="Disordered" evidence="2">
    <location>
        <begin position="1"/>
        <end position="66"/>
    </location>
</feature>
<feature type="compositionally biased region" description="Low complexity" evidence="2">
    <location>
        <begin position="14"/>
        <end position="25"/>
    </location>
</feature>
<feature type="compositionally biased region" description="Low complexity" evidence="2">
    <location>
        <begin position="41"/>
        <end position="54"/>
    </location>
</feature>
<feature type="active site" evidence="1">
    <location>
        <position position="204"/>
    </location>
</feature>
<feature type="active site" evidence="1">
    <location>
        <position position="646"/>
    </location>
</feature>